<name>RLMKL_YERPS</name>
<proteinExistence type="inferred from homology"/>
<dbReference type="EC" id="2.1.1.173" evidence="1"/>
<dbReference type="EC" id="2.1.1.264" evidence="1"/>
<dbReference type="EMBL" id="BX936398">
    <property type="protein sequence ID" value="CAH20682.1"/>
    <property type="molecule type" value="Genomic_DNA"/>
</dbReference>
<dbReference type="RefSeq" id="WP_011192066.1">
    <property type="nucleotide sequence ID" value="NC_006155.1"/>
</dbReference>
<dbReference type="SMR" id="Q66CG1"/>
<dbReference type="KEGG" id="ypo:BZ17_1075"/>
<dbReference type="KEGG" id="yps:YPTB1442"/>
<dbReference type="PATRIC" id="fig|273123.14.peg.1140"/>
<dbReference type="Proteomes" id="UP000001011">
    <property type="component" value="Chromosome"/>
</dbReference>
<dbReference type="GO" id="GO:0005737">
    <property type="term" value="C:cytoplasm"/>
    <property type="evidence" value="ECO:0007669"/>
    <property type="project" value="UniProtKB-SubCell"/>
</dbReference>
<dbReference type="GO" id="GO:0052915">
    <property type="term" value="F:23S rRNA (guanine(2445)-N(2))-methyltransferase activity"/>
    <property type="evidence" value="ECO:0007669"/>
    <property type="project" value="UniProtKB-UniRule"/>
</dbReference>
<dbReference type="GO" id="GO:0003723">
    <property type="term" value="F:RNA binding"/>
    <property type="evidence" value="ECO:0007669"/>
    <property type="project" value="UniProtKB-KW"/>
</dbReference>
<dbReference type="GO" id="GO:0070043">
    <property type="term" value="F:rRNA (guanine-N7-)-methyltransferase activity"/>
    <property type="evidence" value="ECO:0007669"/>
    <property type="project" value="UniProtKB-UniRule"/>
</dbReference>
<dbReference type="CDD" id="cd02440">
    <property type="entry name" value="AdoMet_MTases"/>
    <property type="match status" value="2"/>
</dbReference>
<dbReference type="CDD" id="cd11715">
    <property type="entry name" value="THUMP_AdoMetMT"/>
    <property type="match status" value="1"/>
</dbReference>
<dbReference type="FunFam" id="3.30.750.80:FF:000001">
    <property type="entry name" value="Ribosomal RNA large subunit methyltransferase K/L"/>
    <property type="match status" value="1"/>
</dbReference>
<dbReference type="FunFam" id="3.40.50.150:FF:000039">
    <property type="entry name" value="Ribosomal RNA large subunit methyltransferase K/L"/>
    <property type="match status" value="1"/>
</dbReference>
<dbReference type="Gene3D" id="3.30.2130.30">
    <property type="match status" value="1"/>
</dbReference>
<dbReference type="Gene3D" id="3.30.750.80">
    <property type="entry name" value="RNA methyltransferase domain (HRMD) like"/>
    <property type="match status" value="1"/>
</dbReference>
<dbReference type="Gene3D" id="3.40.50.150">
    <property type="entry name" value="Vaccinia Virus protein VP39"/>
    <property type="match status" value="2"/>
</dbReference>
<dbReference type="HAMAP" id="MF_01858">
    <property type="entry name" value="23SrRNA_methyltr_KL"/>
    <property type="match status" value="1"/>
</dbReference>
<dbReference type="InterPro" id="IPR017244">
    <property type="entry name" value="23SrRNA_methyltr_KL"/>
</dbReference>
<dbReference type="InterPro" id="IPR002052">
    <property type="entry name" value="DNA_methylase_N6_adenine_CS"/>
</dbReference>
<dbReference type="InterPro" id="IPR000241">
    <property type="entry name" value="RlmKL-like_Mtase"/>
</dbReference>
<dbReference type="InterPro" id="IPR053943">
    <property type="entry name" value="RlmKL-like_Mtase_CS"/>
</dbReference>
<dbReference type="InterPro" id="IPR054170">
    <property type="entry name" value="RlmL_1st"/>
</dbReference>
<dbReference type="InterPro" id="IPR019614">
    <property type="entry name" value="SAM-dep_methyl-trfase"/>
</dbReference>
<dbReference type="InterPro" id="IPR029063">
    <property type="entry name" value="SAM-dependent_MTases_sf"/>
</dbReference>
<dbReference type="InterPro" id="IPR004114">
    <property type="entry name" value="THUMP_dom"/>
</dbReference>
<dbReference type="NCBIfam" id="NF008748">
    <property type="entry name" value="PRK11783.1"/>
    <property type="match status" value="1"/>
</dbReference>
<dbReference type="PANTHER" id="PTHR47313">
    <property type="entry name" value="RIBOSOMAL RNA LARGE SUBUNIT METHYLTRANSFERASE K/L"/>
    <property type="match status" value="1"/>
</dbReference>
<dbReference type="PANTHER" id="PTHR47313:SF1">
    <property type="entry name" value="RIBOSOMAL RNA LARGE SUBUNIT METHYLTRANSFERASE K_L"/>
    <property type="match status" value="1"/>
</dbReference>
<dbReference type="Pfam" id="PF10672">
    <property type="entry name" value="Methyltrans_SAM"/>
    <property type="match status" value="1"/>
</dbReference>
<dbReference type="Pfam" id="PF22020">
    <property type="entry name" value="RlmL_1st"/>
    <property type="match status" value="1"/>
</dbReference>
<dbReference type="Pfam" id="PF02926">
    <property type="entry name" value="THUMP"/>
    <property type="match status" value="1"/>
</dbReference>
<dbReference type="Pfam" id="PF01170">
    <property type="entry name" value="UPF0020"/>
    <property type="match status" value="1"/>
</dbReference>
<dbReference type="PIRSF" id="PIRSF037618">
    <property type="entry name" value="RNA_Mtase_bacteria_prd"/>
    <property type="match status" value="1"/>
</dbReference>
<dbReference type="SMART" id="SM00981">
    <property type="entry name" value="THUMP"/>
    <property type="match status" value="1"/>
</dbReference>
<dbReference type="SUPFAM" id="SSF53335">
    <property type="entry name" value="S-adenosyl-L-methionine-dependent methyltransferases"/>
    <property type="match status" value="2"/>
</dbReference>
<dbReference type="PROSITE" id="PS51165">
    <property type="entry name" value="THUMP"/>
    <property type="match status" value="1"/>
</dbReference>
<dbReference type="PROSITE" id="PS01261">
    <property type="entry name" value="UPF0020"/>
    <property type="match status" value="1"/>
</dbReference>
<reference key="1">
    <citation type="journal article" date="2004" name="Proc. Natl. Acad. Sci. U.S.A.">
        <title>Insights into the evolution of Yersinia pestis through whole-genome comparison with Yersinia pseudotuberculosis.</title>
        <authorList>
            <person name="Chain P.S.G."/>
            <person name="Carniel E."/>
            <person name="Larimer F.W."/>
            <person name="Lamerdin J."/>
            <person name="Stoutland P.O."/>
            <person name="Regala W.M."/>
            <person name="Georgescu A.M."/>
            <person name="Vergez L.M."/>
            <person name="Land M.L."/>
            <person name="Motin V.L."/>
            <person name="Brubaker R.R."/>
            <person name="Fowler J."/>
            <person name="Hinnebusch J."/>
            <person name="Marceau M."/>
            <person name="Medigue C."/>
            <person name="Simonet M."/>
            <person name="Chenal-Francisque V."/>
            <person name="Souza B."/>
            <person name="Dacheux D."/>
            <person name="Elliott J.M."/>
            <person name="Derbise A."/>
            <person name="Hauser L.J."/>
            <person name="Garcia E."/>
        </authorList>
    </citation>
    <scope>NUCLEOTIDE SEQUENCE [LARGE SCALE GENOMIC DNA]</scope>
    <source>
        <strain>IP32953</strain>
    </source>
</reference>
<gene>
    <name evidence="1" type="primary">rlmL</name>
    <name type="ordered locus">YPTB1442</name>
</gene>
<feature type="chain" id="PRO_0000366871" description="Ribosomal RNA large subunit methyltransferase K/L">
    <location>
        <begin position="1"/>
        <end position="706"/>
    </location>
</feature>
<feature type="domain" description="THUMP" evidence="1">
    <location>
        <begin position="43"/>
        <end position="154"/>
    </location>
</feature>
<evidence type="ECO:0000255" key="1">
    <source>
        <dbReference type="HAMAP-Rule" id="MF_01858"/>
    </source>
</evidence>
<organism>
    <name type="scientific">Yersinia pseudotuberculosis serotype I (strain IP32953)</name>
    <dbReference type="NCBI Taxonomy" id="273123"/>
    <lineage>
        <taxon>Bacteria</taxon>
        <taxon>Pseudomonadati</taxon>
        <taxon>Pseudomonadota</taxon>
        <taxon>Gammaproteobacteria</taxon>
        <taxon>Enterobacterales</taxon>
        <taxon>Yersiniaceae</taxon>
        <taxon>Yersinia</taxon>
    </lineage>
</organism>
<sequence>MNSLFASTARGLEELLKSELEALGAHDCKIVQGGVHFQGDDRLMYQSLLWSRLASRILLPLNEFKVYSDLDLYLGVQAIDWPSIFGVDKTFAVHFSGVNDEIRNSQYGALKVKDAIVDSFTRKMDQRPTVAKQQPDIRVNVFLQRDMASVALDLSGEGLHQRGYRDLTGQAPLKENLAAAIIQRSGWQPGTPMVDPMCGSGTLLIEAAMMASDRAPGLHRGHWGFTAWNAFNEALWRELTTEAQVRARRGLLETSSRFFGSDIDRRVIEMARANARRAGVAELITFNANDISKLVNPLPEGPVGTVISNPPYGERLESEPALIALHNMFGRMMKTAFGGWRLSLFSASPELLSCLQLRADREFKAKNGPLDCVQKNYQLTANPQGAGGALVAEDYANRLRKNVKKLDKWAKQQGIECYRLYDADLPDYNVAVDRYGSKVVVQEYAPPKTIDPQKARQRLFDVINATLAVLELPSNQLVLKTRERQKGKNQYEKLAQKGEFLLVSEYNAKLWVNLTDYLDTGLFLDHRIARQMLGKMSQGKDFLNLFAYTGTASVHAGLGGARSTTTVDMSRTYLEWAEKNLRANGLTGQQHRLIQADCLSWLSNTDEQFDVIFIDPPTFSNSKRMETTFDVQRDHLVLMKELKRLLRRKGTIMFSNNKRGFQMDLAGIAALGLEAKEITALTQSEDFARNRQIHNCWLVTHSQEEK</sequence>
<accession>Q66CG1</accession>
<keyword id="KW-0963">Cytoplasm</keyword>
<keyword id="KW-0489">Methyltransferase</keyword>
<keyword id="KW-0694">RNA-binding</keyword>
<keyword id="KW-0698">rRNA processing</keyword>
<keyword id="KW-0949">S-adenosyl-L-methionine</keyword>
<keyword id="KW-0808">Transferase</keyword>
<protein>
    <recommendedName>
        <fullName evidence="1">Ribosomal RNA large subunit methyltransferase K/L</fullName>
    </recommendedName>
    <domain>
        <recommendedName>
            <fullName evidence="1">23S rRNA m2G2445 methyltransferase</fullName>
            <ecNumber evidence="1">2.1.1.173</ecNumber>
        </recommendedName>
        <alternativeName>
            <fullName evidence="1">rRNA (guanine-N(2)-)-methyltransferase RlmL</fullName>
        </alternativeName>
    </domain>
    <domain>
        <recommendedName>
            <fullName evidence="1">23S rRNA m7G2069 methyltransferase</fullName>
            <ecNumber evidence="1">2.1.1.264</ecNumber>
        </recommendedName>
        <alternativeName>
            <fullName evidence="1">rRNA (guanine-N(7)-)-methyltransferase RlmK</fullName>
        </alternativeName>
    </domain>
</protein>
<comment type="function">
    <text evidence="1">Specifically methylates the guanine in position 2445 (m2G2445) and the guanine in position 2069 (m7G2069) of 23S rRNA.</text>
</comment>
<comment type="catalytic activity">
    <reaction evidence="1">
        <text>guanosine(2445) in 23S rRNA + S-adenosyl-L-methionine = N(2)-methylguanosine(2445) in 23S rRNA + S-adenosyl-L-homocysteine + H(+)</text>
        <dbReference type="Rhea" id="RHEA:42740"/>
        <dbReference type="Rhea" id="RHEA-COMP:10215"/>
        <dbReference type="Rhea" id="RHEA-COMP:10216"/>
        <dbReference type="ChEBI" id="CHEBI:15378"/>
        <dbReference type="ChEBI" id="CHEBI:57856"/>
        <dbReference type="ChEBI" id="CHEBI:59789"/>
        <dbReference type="ChEBI" id="CHEBI:74269"/>
        <dbReference type="ChEBI" id="CHEBI:74481"/>
        <dbReference type="EC" id="2.1.1.173"/>
    </reaction>
</comment>
<comment type="catalytic activity">
    <reaction evidence="1">
        <text>guanosine(2069) in 23S rRNA + S-adenosyl-L-methionine = N(2)-methylguanosine(2069) in 23S rRNA + S-adenosyl-L-homocysteine + H(+)</text>
        <dbReference type="Rhea" id="RHEA:43772"/>
        <dbReference type="Rhea" id="RHEA-COMP:10688"/>
        <dbReference type="Rhea" id="RHEA-COMP:10689"/>
        <dbReference type="ChEBI" id="CHEBI:15378"/>
        <dbReference type="ChEBI" id="CHEBI:57856"/>
        <dbReference type="ChEBI" id="CHEBI:59789"/>
        <dbReference type="ChEBI" id="CHEBI:74269"/>
        <dbReference type="ChEBI" id="CHEBI:74481"/>
        <dbReference type="EC" id="2.1.1.264"/>
    </reaction>
</comment>
<comment type="subcellular location">
    <subcellularLocation>
        <location evidence="1">Cytoplasm</location>
    </subcellularLocation>
</comment>
<comment type="similarity">
    <text evidence="1">Belongs to the methyltransferase superfamily. RlmKL family.</text>
</comment>